<comment type="function">
    <text evidence="1">The B regulatory subunit may modulate substrate selectivity and catalytic activity, and may also direct the localization of the catalytic enzyme to a particular subcellular compartment.</text>
</comment>
<comment type="subunit">
    <text evidence="1">PP2A consists of a common heteromeric enzyme, composed of a catalytic subunit (subunits C), a constant regulatory subunit (subunit A), and a variety of regulatory subunits such as subunits B (the R2/B/PR55/B55, R3/B''/PR72/PR130/PR59 and R5/B'/B56 families).</text>
</comment>
<comment type="similarity">
    <text evidence="3">Belongs to the phosphatase 2A regulatory subunit B family.</text>
</comment>
<accession>Q0E2P1</accession>
<accession>A3A4Q0</accession>
<accession>B7ERB7</accession>
<accession>O82774</accession>
<accession>Q6Z8B7</accession>
<protein>
    <recommendedName>
        <fullName>Serine/threonine protein phosphatase 2A 55 kDa regulatory subunit B beta isoform</fullName>
        <shortName>PP2A, subunit B, beta isoform</shortName>
    </recommendedName>
</protein>
<reference key="1">
    <citation type="journal article" date="2005" name="Nature">
        <title>The map-based sequence of the rice genome.</title>
        <authorList>
            <consortium name="International rice genome sequencing project (IRGSP)"/>
        </authorList>
    </citation>
    <scope>NUCLEOTIDE SEQUENCE [LARGE SCALE GENOMIC DNA]</scope>
    <source>
        <strain>cv. Nipponbare</strain>
    </source>
</reference>
<reference key="2">
    <citation type="journal article" date="2008" name="Nucleic Acids Res.">
        <title>The rice annotation project database (RAP-DB): 2008 update.</title>
        <authorList>
            <consortium name="The rice annotation project (RAP)"/>
        </authorList>
    </citation>
    <scope>GENOME REANNOTATION</scope>
    <source>
        <strain>cv. Nipponbare</strain>
    </source>
</reference>
<reference key="3">
    <citation type="journal article" date="2013" name="Rice">
        <title>Improvement of the Oryza sativa Nipponbare reference genome using next generation sequence and optical map data.</title>
        <authorList>
            <person name="Kawahara Y."/>
            <person name="de la Bastide M."/>
            <person name="Hamilton J.P."/>
            <person name="Kanamori H."/>
            <person name="McCombie W.R."/>
            <person name="Ouyang S."/>
            <person name="Schwartz D.C."/>
            <person name="Tanaka T."/>
            <person name="Wu J."/>
            <person name="Zhou S."/>
            <person name="Childs K.L."/>
            <person name="Davidson R.M."/>
            <person name="Lin H."/>
            <person name="Quesada-Ocampo L."/>
            <person name="Vaillancourt B."/>
            <person name="Sakai H."/>
            <person name="Lee S.S."/>
            <person name="Kim J."/>
            <person name="Numa H."/>
            <person name="Itoh T."/>
            <person name="Buell C.R."/>
            <person name="Matsumoto T."/>
        </authorList>
    </citation>
    <scope>GENOME REANNOTATION</scope>
    <source>
        <strain>cv. Nipponbare</strain>
    </source>
</reference>
<reference key="4">
    <citation type="journal article" date="2005" name="PLoS Biol.">
        <title>The genomes of Oryza sativa: a history of duplications.</title>
        <authorList>
            <person name="Yu J."/>
            <person name="Wang J."/>
            <person name="Lin W."/>
            <person name="Li S."/>
            <person name="Li H."/>
            <person name="Zhou J."/>
            <person name="Ni P."/>
            <person name="Dong W."/>
            <person name="Hu S."/>
            <person name="Zeng C."/>
            <person name="Zhang J."/>
            <person name="Zhang Y."/>
            <person name="Li R."/>
            <person name="Xu Z."/>
            <person name="Li S."/>
            <person name="Li X."/>
            <person name="Zheng H."/>
            <person name="Cong L."/>
            <person name="Lin L."/>
            <person name="Yin J."/>
            <person name="Geng J."/>
            <person name="Li G."/>
            <person name="Shi J."/>
            <person name="Liu J."/>
            <person name="Lv H."/>
            <person name="Li J."/>
            <person name="Wang J."/>
            <person name="Deng Y."/>
            <person name="Ran L."/>
            <person name="Shi X."/>
            <person name="Wang X."/>
            <person name="Wu Q."/>
            <person name="Li C."/>
            <person name="Ren X."/>
            <person name="Wang J."/>
            <person name="Wang X."/>
            <person name="Li D."/>
            <person name="Liu D."/>
            <person name="Zhang X."/>
            <person name="Ji Z."/>
            <person name="Zhao W."/>
            <person name="Sun Y."/>
            <person name="Zhang Z."/>
            <person name="Bao J."/>
            <person name="Han Y."/>
            <person name="Dong L."/>
            <person name="Ji J."/>
            <person name="Chen P."/>
            <person name="Wu S."/>
            <person name="Liu J."/>
            <person name="Xiao Y."/>
            <person name="Bu D."/>
            <person name="Tan J."/>
            <person name="Yang L."/>
            <person name="Ye C."/>
            <person name="Zhang J."/>
            <person name="Xu J."/>
            <person name="Zhou Y."/>
            <person name="Yu Y."/>
            <person name="Zhang B."/>
            <person name="Zhuang S."/>
            <person name="Wei H."/>
            <person name="Liu B."/>
            <person name="Lei M."/>
            <person name="Yu H."/>
            <person name="Li Y."/>
            <person name="Xu H."/>
            <person name="Wei S."/>
            <person name="He X."/>
            <person name="Fang L."/>
            <person name="Zhang Z."/>
            <person name="Zhang Y."/>
            <person name="Huang X."/>
            <person name="Su Z."/>
            <person name="Tong W."/>
            <person name="Li J."/>
            <person name="Tong Z."/>
            <person name="Li S."/>
            <person name="Ye J."/>
            <person name="Wang L."/>
            <person name="Fang L."/>
            <person name="Lei T."/>
            <person name="Chen C.-S."/>
            <person name="Chen H.-C."/>
            <person name="Xu Z."/>
            <person name="Li H."/>
            <person name="Huang H."/>
            <person name="Zhang F."/>
            <person name="Xu H."/>
            <person name="Li N."/>
            <person name="Zhao C."/>
            <person name="Li S."/>
            <person name="Dong L."/>
            <person name="Huang Y."/>
            <person name="Li L."/>
            <person name="Xi Y."/>
            <person name="Qi Q."/>
            <person name="Li W."/>
            <person name="Zhang B."/>
            <person name="Hu W."/>
            <person name="Zhang Y."/>
            <person name="Tian X."/>
            <person name="Jiao Y."/>
            <person name="Liang X."/>
            <person name="Jin J."/>
            <person name="Gao L."/>
            <person name="Zheng W."/>
            <person name="Hao B."/>
            <person name="Liu S.-M."/>
            <person name="Wang W."/>
            <person name="Yuan L."/>
            <person name="Cao M."/>
            <person name="McDermott J."/>
            <person name="Samudrala R."/>
            <person name="Wang J."/>
            <person name="Wong G.K.-S."/>
            <person name="Yang H."/>
        </authorList>
    </citation>
    <scope>NUCLEOTIDE SEQUENCE [LARGE SCALE GENOMIC DNA]</scope>
    <source>
        <strain>cv. Nipponbare</strain>
    </source>
</reference>
<reference key="5">
    <citation type="journal article" date="2003" name="Science">
        <title>Collection, mapping, and annotation of over 28,000 cDNA clones from japonica rice.</title>
        <authorList>
            <consortium name="The rice full-length cDNA consortium"/>
        </authorList>
    </citation>
    <scope>NUCLEOTIDE SEQUENCE [LARGE SCALE MRNA]</scope>
    <source>
        <strain>cv. Nipponbare</strain>
    </source>
</reference>
<sequence length="525" mass="58980">MDPSSKSPDDDDLRPEAEAARRPQPQPQPREWRFAQVFGERAAGEDVQEVDIISAIEFDKSGDHLATGDRGGRVVLFERTDSRDSASRSELERQDYPIARHPEFRYKTEFQSHEPEFDYLKSLEIEEKINKIKWCQTANNALFLLSTNDKTIKYWKVQERKVKRISVMNLNTSQSSGNGTTSSSSSSSSRAILPNGGCSEKLYNFPNNDLLFPPGGCTSLRLPVVVTGQDLNLVPRCRRVYSHAHDYHINSISNNSDGETYISADDLRINLWNLEISNQSFNIVDVKPANMEDLTEVITCAEFHPTHCNTLAYSSSKGSIRLIDLRQSALCDNHAKLFEEHEAPGSRSFFTEIIASVSDIKFARDGRHILSRDYMTLKLWDINMDSGPVATFQVHEYLRPKLCDLYENDSIFDKFECCLSGDGLRVATGSYSNLFRVFGCTPGSAEATTLEASRNPMRRQVANPTRPARTLTSLTRAVRRGGENPGVDANGNSYDLSTKLLHLAWHPTENSIACAAANSLYMYYA</sequence>
<evidence type="ECO:0000250" key="1"/>
<evidence type="ECO:0000256" key="2">
    <source>
        <dbReference type="SAM" id="MobiDB-lite"/>
    </source>
</evidence>
<evidence type="ECO:0000305" key="3"/>
<feature type="chain" id="PRO_0000247273" description="Serine/threonine protein phosphatase 2A 55 kDa regulatory subunit B beta isoform">
    <location>
        <begin position="1"/>
        <end position="525"/>
    </location>
</feature>
<feature type="repeat" description="WD 1">
    <location>
        <begin position="48"/>
        <end position="87"/>
    </location>
</feature>
<feature type="repeat" description="WD 2">
    <location>
        <begin position="124"/>
        <end position="165"/>
    </location>
</feature>
<feature type="repeat" description="WD 3">
    <location>
        <begin position="244"/>
        <end position="282"/>
    </location>
</feature>
<feature type="repeat" description="WD 4">
    <location>
        <begin position="293"/>
        <end position="333"/>
    </location>
</feature>
<feature type="repeat" description="WD 5">
    <location>
        <begin position="352"/>
        <end position="390"/>
    </location>
</feature>
<feature type="repeat" description="WD 6">
    <location>
        <begin position="495"/>
        <end position="525"/>
    </location>
</feature>
<feature type="region of interest" description="Disordered" evidence="2">
    <location>
        <begin position="1"/>
        <end position="30"/>
    </location>
</feature>
<feature type="region of interest" description="Disordered" evidence="2">
    <location>
        <begin position="169"/>
        <end position="191"/>
    </location>
</feature>
<feature type="compositionally biased region" description="Low complexity" evidence="2">
    <location>
        <begin position="171"/>
        <end position="189"/>
    </location>
</feature>
<feature type="sequence conflict" description="In Ref. 4; CM000139." evidence="3" ref="4">
    <original>R</original>
    <variation>K</variation>
    <location>
        <position position="21"/>
    </location>
</feature>
<dbReference type="EMBL" id="AP004779">
    <property type="protein sequence ID" value="BAD17063.1"/>
    <property type="molecule type" value="Genomic_DNA"/>
</dbReference>
<dbReference type="EMBL" id="AP008208">
    <property type="protein sequence ID" value="BAF08247.1"/>
    <property type="molecule type" value="Genomic_DNA"/>
</dbReference>
<dbReference type="EMBL" id="AP014958">
    <property type="protein sequence ID" value="BAS77723.1"/>
    <property type="molecule type" value="Genomic_DNA"/>
</dbReference>
<dbReference type="EMBL" id="CM000139">
    <property type="status" value="NOT_ANNOTATED_CDS"/>
    <property type="molecule type" value="Genomic_DNA"/>
</dbReference>
<dbReference type="EMBL" id="AK101100">
    <property type="protein sequence ID" value="BAG94914.1"/>
    <property type="molecule type" value="mRNA"/>
</dbReference>
<dbReference type="RefSeq" id="XP_015627366.1">
    <property type="nucleotide sequence ID" value="XM_015771880.1"/>
</dbReference>
<dbReference type="SMR" id="Q0E2P1"/>
<dbReference type="FunCoup" id="Q0E2P1">
    <property type="interactions" value="2435"/>
</dbReference>
<dbReference type="STRING" id="39947.Q0E2P1"/>
<dbReference type="PaxDb" id="39947-Q0E2P1"/>
<dbReference type="EnsemblPlants" id="Os02t0224200-01">
    <property type="protein sequence ID" value="Os02t0224200-01"/>
    <property type="gene ID" value="Os02g0224200"/>
</dbReference>
<dbReference type="Gramene" id="Os02t0224200-01">
    <property type="protein sequence ID" value="Os02t0224200-01"/>
    <property type="gene ID" value="Os02g0224200"/>
</dbReference>
<dbReference type="KEGG" id="dosa:Os02g0224200"/>
<dbReference type="eggNOG" id="KOG1354">
    <property type="taxonomic scope" value="Eukaryota"/>
</dbReference>
<dbReference type="HOGENOM" id="CLU_021713_3_2_1"/>
<dbReference type="InParanoid" id="Q0E2P1"/>
<dbReference type="OMA" id="NQIKWCR"/>
<dbReference type="OrthoDB" id="6274823at2759"/>
<dbReference type="PlantReactome" id="R-OSA-5632095">
    <property type="pathway name" value="Brassinosteroid signaling"/>
</dbReference>
<dbReference type="Proteomes" id="UP000000763">
    <property type="component" value="Chromosome 2"/>
</dbReference>
<dbReference type="Proteomes" id="UP000007752">
    <property type="component" value="Chromosome 2"/>
</dbReference>
<dbReference type="Proteomes" id="UP000059680">
    <property type="component" value="Chromosome 2"/>
</dbReference>
<dbReference type="GO" id="GO:0005829">
    <property type="term" value="C:cytosol"/>
    <property type="evidence" value="ECO:0000318"/>
    <property type="project" value="GO_Central"/>
</dbReference>
<dbReference type="GO" id="GO:0000159">
    <property type="term" value="C:protein phosphatase type 2A complex"/>
    <property type="evidence" value="ECO:0000318"/>
    <property type="project" value="GO_Central"/>
</dbReference>
<dbReference type="GO" id="GO:0019888">
    <property type="term" value="F:protein phosphatase regulator activity"/>
    <property type="evidence" value="ECO:0000318"/>
    <property type="project" value="GO_Central"/>
</dbReference>
<dbReference type="FunFam" id="2.130.10.10:FF:000569">
    <property type="entry name" value="Serine/threonine-protein phosphatase 2A 55 kDa regulatory subunit B"/>
    <property type="match status" value="1"/>
</dbReference>
<dbReference type="FunFam" id="2.130.10.10:FF:000609">
    <property type="entry name" value="Serine/threonine-protein phosphatase 2A 55 kDa regulatory subunit B"/>
    <property type="match status" value="1"/>
</dbReference>
<dbReference type="Gene3D" id="2.130.10.10">
    <property type="entry name" value="YVTN repeat-like/Quinoprotein amine dehydrogenase"/>
    <property type="match status" value="1"/>
</dbReference>
<dbReference type="InterPro" id="IPR000009">
    <property type="entry name" value="PP2A_PR55"/>
</dbReference>
<dbReference type="InterPro" id="IPR018067">
    <property type="entry name" value="PP2A_PR55_CS"/>
</dbReference>
<dbReference type="InterPro" id="IPR015943">
    <property type="entry name" value="WD40/YVTN_repeat-like_dom_sf"/>
</dbReference>
<dbReference type="InterPro" id="IPR036322">
    <property type="entry name" value="WD40_repeat_dom_sf"/>
</dbReference>
<dbReference type="InterPro" id="IPR001680">
    <property type="entry name" value="WD40_rpt"/>
</dbReference>
<dbReference type="PANTHER" id="PTHR11871">
    <property type="entry name" value="PROTEIN PHOSPHATASE PP2A REGULATORY SUBUNIT B"/>
    <property type="match status" value="1"/>
</dbReference>
<dbReference type="Pfam" id="PF00400">
    <property type="entry name" value="WD40"/>
    <property type="match status" value="1"/>
</dbReference>
<dbReference type="PIRSF" id="PIRSF037309">
    <property type="entry name" value="PP2A_PR55"/>
    <property type="match status" value="1"/>
</dbReference>
<dbReference type="PRINTS" id="PR00600">
    <property type="entry name" value="PP2APR55"/>
</dbReference>
<dbReference type="SMART" id="SM00320">
    <property type="entry name" value="WD40"/>
    <property type="match status" value="6"/>
</dbReference>
<dbReference type="SUPFAM" id="SSF50978">
    <property type="entry name" value="WD40 repeat-like"/>
    <property type="match status" value="1"/>
</dbReference>
<dbReference type="PROSITE" id="PS01024">
    <property type="entry name" value="PR55_1"/>
    <property type="match status" value="1"/>
</dbReference>
<dbReference type="PROSITE" id="PS01025">
    <property type="entry name" value="PR55_2"/>
    <property type="match status" value="1"/>
</dbReference>
<dbReference type="PROSITE" id="PS00678">
    <property type="entry name" value="WD_REPEATS_1"/>
    <property type="match status" value="1"/>
</dbReference>
<proteinExistence type="evidence at transcript level"/>
<organism>
    <name type="scientific">Oryza sativa subsp. japonica</name>
    <name type="common">Rice</name>
    <dbReference type="NCBI Taxonomy" id="39947"/>
    <lineage>
        <taxon>Eukaryota</taxon>
        <taxon>Viridiplantae</taxon>
        <taxon>Streptophyta</taxon>
        <taxon>Embryophyta</taxon>
        <taxon>Tracheophyta</taxon>
        <taxon>Spermatophyta</taxon>
        <taxon>Magnoliopsida</taxon>
        <taxon>Liliopsida</taxon>
        <taxon>Poales</taxon>
        <taxon>Poaceae</taxon>
        <taxon>BOP clade</taxon>
        <taxon>Oryzoideae</taxon>
        <taxon>Oryzeae</taxon>
        <taxon>Oryzinae</taxon>
        <taxon>Oryza</taxon>
        <taxon>Oryza sativa</taxon>
    </lineage>
</organism>
<name>2ABB_ORYSJ</name>
<gene>
    <name type="ordered locus">Os02g0224200</name>
    <name type="ordered locus">LOC_Os02g13110</name>
    <name type="ORF">OsJ_005772</name>
    <name type="ORF">P0470A03.14</name>
</gene>
<keyword id="KW-1185">Reference proteome</keyword>
<keyword id="KW-0677">Repeat</keyword>
<keyword id="KW-0853">WD repeat</keyword>